<proteinExistence type="inferred from homology"/>
<gene>
    <name evidence="1" type="primary">hutI</name>
    <name type="ordered locus">ASA_3955</name>
</gene>
<reference key="1">
    <citation type="journal article" date="2008" name="BMC Genomics">
        <title>The genome of Aeromonas salmonicida subsp. salmonicida A449: insights into the evolution of a fish pathogen.</title>
        <authorList>
            <person name="Reith M.E."/>
            <person name="Singh R.K."/>
            <person name="Curtis B."/>
            <person name="Boyd J.M."/>
            <person name="Bouevitch A."/>
            <person name="Kimball J."/>
            <person name="Munholland J."/>
            <person name="Murphy C."/>
            <person name="Sarty D."/>
            <person name="Williams J."/>
            <person name="Nash J.H."/>
            <person name="Johnson S.C."/>
            <person name="Brown L.L."/>
        </authorList>
    </citation>
    <scope>NUCLEOTIDE SEQUENCE [LARGE SCALE GENOMIC DNA]</scope>
    <source>
        <strain>A449</strain>
    </source>
</reference>
<keyword id="KW-0963">Cytoplasm</keyword>
<keyword id="KW-0369">Histidine metabolism</keyword>
<keyword id="KW-0378">Hydrolase</keyword>
<keyword id="KW-0408">Iron</keyword>
<keyword id="KW-0479">Metal-binding</keyword>
<keyword id="KW-0862">Zinc</keyword>
<sequence length="411" mass="44527">MNKELLNCERVWLNVTPATLRPDLADYGLLEPHALGVHEGKIHALVPMQDLKGPYPAHWQDMKGKLATPGLIDCHTHLIFAGSRAEEFELRQKGVPYAEIARKGGGILSTVRATRAASEEQLFTLAAARIKSLIREGVTTVEIKSGYGLTLEDELKMLRVARRLGEALPIRVKTTLLAAHAVPPEYRDDPDSWVETICQEIIPAAAEAGLADAVDVFCEHIGFSLAQTEQVYLAADQYGLPVKGHMEQLSNLGGSALAANFGALSVDHLEHLDQEGIQALAHRGVVATLLPTAFYFLKETKLPPVAALRKAHVPMAVSSDINPGTAPIVSLRMAMNMACTLFGLTPVEAMVGVTRNAARALGEQERLGQLRVGMLADFLVWNCAHPAELSYLIGVDQLVSRVVNGEETLHG</sequence>
<protein>
    <recommendedName>
        <fullName evidence="1">Imidazolonepropionase</fullName>
        <ecNumber evidence="1">3.5.2.7</ecNumber>
    </recommendedName>
    <alternativeName>
        <fullName evidence="1">Imidazolone-5-propionate hydrolase</fullName>
    </alternativeName>
</protein>
<dbReference type="EC" id="3.5.2.7" evidence="1"/>
<dbReference type="EMBL" id="CP000644">
    <property type="protein sequence ID" value="ABO91907.1"/>
    <property type="molecule type" value="Genomic_DNA"/>
</dbReference>
<dbReference type="RefSeq" id="WP_005316411.1">
    <property type="nucleotide sequence ID" value="NC_009348.1"/>
</dbReference>
<dbReference type="SMR" id="A4SSN5"/>
<dbReference type="STRING" id="29491.GCA_000820065_02688"/>
<dbReference type="KEGG" id="asa:ASA_3955"/>
<dbReference type="PATRIC" id="fig|382245.13.peg.3921"/>
<dbReference type="eggNOG" id="COG1228">
    <property type="taxonomic scope" value="Bacteria"/>
</dbReference>
<dbReference type="HOGENOM" id="CLU_041647_0_0_6"/>
<dbReference type="UniPathway" id="UPA00379">
    <property type="reaction ID" value="UER00551"/>
</dbReference>
<dbReference type="Proteomes" id="UP000000225">
    <property type="component" value="Chromosome"/>
</dbReference>
<dbReference type="GO" id="GO:0005737">
    <property type="term" value="C:cytoplasm"/>
    <property type="evidence" value="ECO:0007669"/>
    <property type="project" value="UniProtKB-SubCell"/>
</dbReference>
<dbReference type="GO" id="GO:0050480">
    <property type="term" value="F:imidazolonepropionase activity"/>
    <property type="evidence" value="ECO:0007669"/>
    <property type="project" value="UniProtKB-UniRule"/>
</dbReference>
<dbReference type="GO" id="GO:0005506">
    <property type="term" value="F:iron ion binding"/>
    <property type="evidence" value="ECO:0007669"/>
    <property type="project" value="UniProtKB-UniRule"/>
</dbReference>
<dbReference type="GO" id="GO:0008270">
    <property type="term" value="F:zinc ion binding"/>
    <property type="evidence" value="ECO:0007669"/>
    <property type="project" value="UniProtKB-UniRule"/>
</dbReference>
<dbReference type="GO" id="GO:0019556">
    <property type="term" value="P:L-histidine catabolic process to glutamate and formamide"/>
    <property type="evidence" value="ECO:0007669"/>
    <property type="project" value="UniProtKB-UniPathway"/>
</dbReference>
<dbReference type="GO" id="GO:0019557">
    <property type="term" value="P:L-histidine catabolic process to glutamate and formate"/>
    <property type="evidence" value="ECO:0007669"/>
    <property type="project" value="UniProtKB-UniPathway"/>
</dbReference>
<dbReference type="FunFam" id="3.20.20.140:FF:000007">
    <property type="entry name" value="Imidazolonepropionase"/>
    <property type="match status" value="1"/>
</dbReference>
<dbReference type="Gene3D" id="3.20.20.140">
    <property type="entry name" value="Metal-dependent hydrolases"/>
    <property type="match status" value="1"/>
</dbReference>
<dbReference type="Gene3D" id="2.30.40.10">
    <property type="entry name" value="Urease, subunit C, domain 1"/>
    <property type="match status" value="1"/>
</dbReference>
<dbReference type="HAMAP" id="MF_00372">
    <property type="entry name" value="HutI"/>
    <property type="match status" value="1"/>
</dbReference>
<dbReference type="InterPro" id="IPR006680">
    <property type="entry name" value="Amidohydro-rel"/>
</dbReference>
<dbReference type="InterPro" id="IPR005920">
    <property type="entry name" value="HutI"/>
</dbReference>
<dbReference type="InterPro" id="IPR011059">
    <property type="entry name" value="Metal-dep_hydrolase_composite"/>
</dbReference>
<dbReference type="InterPro" id="IPR032466">
    <property type="entry name" value="Metal_Hydrolase"/>
</dbReference>
<dbReference type="NCBIfam" id="TIGR01224">
    <property type="entry name" value="hutI"/>
    <property type="match status" value="1"/>
</dbReference>
<dbReference type="PANTHER" id="PTHR42752">
    <property type="entry name" value="IMIDAZOLONEPROPIONASE"/>
    <property type="match status" value="1"/>
</dbReference>
<dbReference type="PANTHER" id="PTHR42752:SF1">
    <property type="entry name" value="IMIDAZOLONEPROPIONASE-RELATED"/>
    <property type="match status" value="1"/>
</dbReference>
<dbReference type="Pfam" id="PF01979">
    <property type="entry name" value="Amidohydro_1"/>
    <property type="match status" value="1"/>
</dbReference>
<dbReference type="SUPFAM" id="SSF51338">
    <property type="entry name" value="Composite domain of metallo-dependent hydrolases"/>
    <property type="match status" value="1"/>
</dbReference>
<dbReference type="SUPFAM" id="SSF51556">
    <property type="entry name" value="Metallo-dependent hydrolases"/>
    <property type="match status" value="1"/>
</dbReference>
<organism>
    <name type="scientific">Aeromonas salmonicida (strain A449)</name>
    <dbReference type="NCBI Taxonomy" id="382245"/>
    <lineage>
        <taxon>Bacteria</taxon>
        <taxon>Pseudomonadati</taxon>
        <taxon>Pseudomonadota</taxon>
        <taxon>Gammaproteobacteria</taxon>
        <taxon>Aeromonadales</taxon>
        <taxon>Aeromonadaceae</taxon>
        <taxon>Aeromonas</taxon>
    </lineage>
</organism>
<evidence type="ECO:0000255" key="1">
    <source>
        <dbReference type="HAMAP-Rule" id="MF_00372"/>
    </source>
</evidence>
<feature type="chain" id="PRO_0000306423" description="Imidazolonepropionase">
    <location>
        <begin position="1"/>
        <end position="411"/>
    </location>
</feature>
<feature type="binding site" evidence="1">
    <location>
        <position position="75"/>
    </location>
    <ligand>
        <name>Fe(3+)</name>
        <dbReference type="ChEBI" id="CHEBI:29034"/>
    </ligand>
</feature>
<feature type="binding site" evidence="1">
    <location>
        <position position="75"/>
    </location>
    <ligand>
        <name>Zn(2+)</name>
        <dbReference type="ChEBI" id="CHEBI:29105"/>
    </ligand>
</feature>
<feature type="binding site" evidence="1">
    <location>
        <position position="77"/>
    </location>
    <ligand>
        <name>Fe(3+)</name>
        <dbReference type="ChEBI" id="CHEBI:29034"/>
    </ligand>
</feature>
<feature type="binding site" evidence="1">
    <location>
        <position position="77"/>
    </location>
    <ligand>
        <name>Zn(2+)</name>
        <dbReference type="ChEBI" id="CHEBI:29105"/>
    </ligand>
</feature>
<feature type="binding site" evidence="1">
    <location>
        <position position="84"/>
    </location>
    <ligand>
        <name>4-imidazolone-5-propanoate</name>
        <dbReference type="ChEBI" id="CHEBI:77893"/>
    </ligand>
</feature>
<feature type="binding site" evidence="1">
    <location>
        <position position="147"/>
    </location>
    <ligand>
        <name>4-imidazolone-5-propanoate</name>
        <dbReference type="ChEBI" id="CHEBI:77893"/>
    </ligand>
</feature>
<feature type="binding site" evidence="1">
    <location>
        <position position="147"/>
    </location>
    <ligand>
        <name>N-formimidoyl-L-glutamate</name>
        <dbReference type="ChEBI" id="CHEBI:58928"/>
    </ligand>
</feature>
<feature type="binding site" evidence="1">
    <location>
        <position position="180"/>
    </location>
    <ligand>
        <name>4-imidazolone-5-propanoate</name>
        <dbReference type="ChEBI" id="CHEBI:77893"/>
    </ligand>
</feature>
<feature type="binding site" evidence="1">
    <location>
        <position position="245"/>
    </location>
    <ligand>
        <name>Fe(3+)</name>
        <dbReference type="ChEBI" id="CHEBI:29034"/>
    </ligand>
</feature>
<feature type="binding site" evidence="1">
    <location>
        <position position="245"/>
    </location>
    <ligand>
        <name>Zn(2+)</name>
        <dbReference type="ChEBI" id="CHEBI:29105"/>
    </ligand>
</feature>
<feature type="binding site" evidence="1">
    <location>
        <position position="248"/>
    </location>
    <ligand>
        <name>4-imidazolone-5-propanoate</name>
        <dbReference type="ChEBI" id="CHEBI:77893"/>
    </ligand>
</feature>
<feature type="binding site" evidence="1">
    <location>
        <position position="320"/>
    </location>
    <ligand>
        <name>Fe(3+)</name>
        <dbReference type="ChEBI" id="CHEBI:29034"/>
    </ligand>
</feature>
<feature type="binding site" evidence="1">
    <location>
        <position position="320"/>
    </location>
    <ligand>
        <name>Zn(2+)</name>
        <dbReference type="ChEBI" id="CHEBI:29105"/>
    </ligand>
</feature>
<feature type="binding site" evidence="1">
    <location>
        <position position="322"/>
    </location>
    <ligand>
        <name>N-formimidoyl-L-glutamate</name>
        <dbReference type="ChEBI" id="CHEBI:58928"/>
    </ligand>
</feature>
<feature type="binding site" evidence="1">
    <location>
        <position position="324"/>
    </location>
    <ligand>
        <name>N-formimidoyl-L-glutamate</name>
        <dbReference type="ChEBI" id="CHEBI:58928"/>
    </ligand>
</feature>
<feature type="binding site" evidence="1">
    <location>
        <position position="325"/>
    </location>
    <ligand>
        <name>4-imidazolone-5-propanoate</name>
        <dbReference type="ChEBI" id="CHEBI:77893"/>
    </ligand>
</feature>
<name>HUTI_AERS4</name>
<accession>A4SSN5</accession>
<comment type="function">
    <text evidence="1">Catalyzes the hydrolytic cleavage of the carbon-nitrogen bond in imidazolone-5-propanoate to yield N-formimidoyl-L-glutamate. It is the third step in the universal histidine degradation pathway.</text>
</comment>
<comment type="catalytic activity">
    <reaction evidence="1">
        <text>4-imidazolone-5-propanoate + H2O = N-formimidoyl-L-glutamate</text>
        <dbReference type="Rhea" id="RHEA:23660"/>
        <dbReference type="ChEBI" id="CHEBI:15377"/>
        <dbReference type="ChEBI" id="CHEBI:58928"/>
        <dbReference type="ChEBI" id="CHEBI:77893"/>
        <dbReference type="EC" id="3.5.2.7"/>
    </reaction>
</comment>
<comment type="cofactor">
    <cofactor evidence="1">
        <name>Zn(2+)</name>
        <dbReference type="ChEBI" id="CHEBI:29105"/>
    </cofactor>
    <cofactor evidence="1">
        <name>Fe(3+)</name>
        <dbReference type="ChEBI" id="CHEBI:29034"/>
    </cofactor>
    <text evidence="1">Binds 1 zinc or iron ion per subunit.</text>
</comment>
<comment type="pathway">
    <text evidence="1">Amino-acid degradation; L-histidine degradation into L-glutamate; N-formimidoyl-L-glutamate from L-histidine: step 3/3.</text>
</comment>
<comment type="subcellular location">
    <subcellularLocation>
        <location evidence="1">Cytoplasm</location>
    </subcellularLocation>
</comment>
<comment type="similarity">
    <text evidence="1">Belongs to the metallo-dependent hydrolases superfamily. HutI family.</text>
</comment>